<proteinExistence type="evidence at protein level"/>
<keyword id="KW-0037">Angiogenesis</keyword>
<keyword id="KW-0217">Developmental protein</keyword>
<keyword id="KW-0221">Differentiation</keyword>
<keyword id="KW-0903">Direct protein sequencing</keyword>
<keyword id="KW-0339">Growth factor</keyword>
<keyword id="KW-0358">Heparin-binding</keyword>
<keyword id="KW-1017">Isopeptide bond</keyword>
<keyword id="KW-0497">Mitogen</keyword>
<keyword id="KW-0539">Nucleus</keyword>
<keyword id="KW-0597">Phosphoprotein</keyword>
<keyword id="KW-1185">Reference proteome</keyword>
<keyword id="KW-0964">Secreted</keyword>
<keyword id="KW-0832">Ubl conjugation</keyword>
<name>FGF2_BOVIN</name>
<dbReference type="EMBL" id="M13440">
    <property type="protein sequence ID" value="AAA30518.1"/>
    <property type="molecule type" value="mRNA"/>
</dbReference>
<dbReference type="PIR" id="A24663">
    <property type="entry name" value="GKBOB"/>
</dbReference>
<dbReference type="SMR" id="P03969"/>
<dbReference type="FunCoup" id="P03969">
    <property type="interactions" value="167"/>
</dbReference>
<dbReference type="IntAct" id="P03969">
    <property type="interactions" value="1"/>
</dbReference>
<dbReference type="STRING" id="9913.ENSBTAP00000007477"/>
<dbReference type="PaxDb" id="9913-ENSBTAP00000007477"/>
<dbReference type="VEuPathDB" id="HostDB:ENSBTAG00000005691"/>
<dbReference type="eggNOG" id="KOG3885">
    <property type="taxonomic scope" value="Eukaryota"/>
</dbReference>
<dbReference type="InParanoid" id="P03969"/>
<dbReference type="OMA" id="KGVCSNR"/>
<dbReference type="OrthoDB" id="5987799at2759"/>
<dbReference type="Reactome" id="R-BTA-109704">
    <property type="pathway name" value="PI3K Cascade"/>
</dbReference>
<dbReference type="Reactome" id="R-BTA-1257604">
    <property type="pathway name" value="PIP3 activates AKT signaling"/>
</dbReference>
<dbReference type="Reactome" id="R-BTA-190322">
    <property type="pathway name" value="FGFR4 ligand binding and activation"/>
</dbReference>
<dbReference type="Reactome" id="R-BTA-190370">
    <property type="pathway name" value="FGFR1b ligand binding and activation"/>
</dbReference>
<dbReference type="Reactome" id="R-BTA-190372">
    <property type="pathway name" value="FGFR3c ligand binding and activation"/>
</dbReference>
<dbReference type="Reactome" id="R-BTA-190373">
    <property type="pathway name" value="FGFR1c ligand binding and activation"/>
</dbReference>
<dbReference type="Reactome" id="R-BTA-190375">
    <property type="pathway name" value="FGFR2c ligand binding and activation"/>
</dbReference>
<dbReference type="Reactome" id="R-BTA-190377">
    <property type="pathway name" value="FGFR2b ligand binding and activation"/>
</dbReference>
<dbReference type="Reactome" id="R-BTA-3000170">
    <property type="pathway name" value="Syndecan interactions"/>
</dbReference>
<dbReference type="Reactome" id="R-BTA-5654219">
    <property type="pathway name" value="Phospholipase C-mediated cascade: FGFR1"/>
</dbReference>
<dbReference type="Reactome" id="R-BTA-5654221">
    <property type="pathway name" value="Phospholipase C-mediated cascade, FGFR2"/>
</dbReference>
<dbReference type="Reactome" id="R-BTA-5654227">
    <property type="pathway name" value="Phospholipase C-mediated cascade, FGFR3"/>
</dbReference>
<dbReference type="Reactome" id="R-BTA-5654228">
    <property type="pathway name" value="Phospholipase C-mediated cascade, FGFR4"/>
</dbReference>
<dbReference type="Reactome" id="R-BTA-5654687">
    <property type="pathway name" value="Downstream signaling of activated FGFR1"/>
</dbReference>
<dbReference type="Reactome" id="R-BTA-5654688">
    <property type="pathway name" value="SHC-mediated cascade:FGFR1"/>
</dbReference>
<dbReference type="Reactome" id="R-BTA-5654689">
    <property type="pathway name" value="PI-3K cascade:FGFR1"/>
</dbReference>
<dbReference type="Reactome" id="R-BTA-5654693">
    <property type="pathway name" value="FRS-mediated FGFR1 signaling"/>
</dbReference>
<dbReference type="Reactome" id="R-BTA-5654695">
    <property type="pathway name" value="PI-3K cascade:FGFR2"/>
</dbReference>
<dbReference type="Reactome" id="R-BTA-5654699">
    <property type="pathway name" value="SHC-mediated cascade:FGFR2"/>
</dbReference>
<dbReference type="Reactome" id="R-BTA-5654700">
    <property type="pathway name" value="FRS-mediated FGFR2 signaling"/>
</dbReference>
<dbReference type="Reactome" id="R-BTA-5654704">
    <property type="pathway name" value="SHC-mediated cascade:FGFR3"/>
</dbReference>
<dbReference type="Reactome" id="R-BTA-5654706">
    <property type="pathway name" value="FRS-mediated FGFR3 signaling"/>
</dbReference>
<dbReference type="Reactome" id="R-BTA-5654710">
    <property type="pathway name" value="PI-3K cascade:FGFR3"/>
</dbReference>
<dbReference type="Reactome" id="R-BTA-5654712">
    <property type="pathway name" value="FRS-mediated FGFR4 signaling"/>
</dbReference>
<dbReference type="Reactome" id="R-BTA-5654719">
    <property type="pathway name" value="SHC-mediated cascade:FGFR4"/>
</dbReference>
<dbReference type="Reactome" id="R-BTA-5654720">
    <property type="pathway name" value="PI-3K cascade:FGFR4"/>
</dbReference>
<dbReference type="Reactome" id="R-BTA-5654726">
    <property type="pathway name" value="Negative regulation of FGFR1 signaling"/>
</dbReference>
<dbReference type="Reactome" id="R-BTA-5654727">
    <property type="pathway name" value="Negative regulation of FGFR2 signaling"/>
</dbReference>
<dbReference type="Reactome" id="R-BTA-5654732">
    <property type="pathway name" value="Negative regulation of FGFR3 signaling"/>
</dbReference>
<dbReference type="Reactome" id="R-BTA-5654733">
    <property type="pathway name" value="Negative regulation of FGFR4 signaling"/>
</dbReference>
<dbReference type="Reactome" id="R-BTA-5658623">
    <property type="pathway name" value="FGFRL1 modulation of FGFR1 signaling"/>
</dbReference>
<dbReference type="Reactome" id="R-BTA-5673001">
    <property type="pathway name" value="RAF/MAP kinase cascade"/>
</dbReference>
<dbReference type="Reactome" id="R-BTA-6811558">
    <property type="pathway name" value="PI5P, PP2A and IER3 Regulate PI3K/AKT Signaling"/>
</dbReference>
<dbReference type="Reactome" id="R-BTA-9839397">
    <property type="pathway name" value="TGFBR3 regulates FGF2 signaling"/>
</dbReference>
<dbReference type="Proteomes" id="UP000009136">
    <property type="component" value="Chromosome 17"/>
</dbReference>
<dbReference type="Bgee" id="ENSBTAG00000005691">
    <property type="expression patterns" value="Expressed in omental fat pad and 103 other cell types or tissues"/>
</dbReference>
<dbReference type="GO" id="GO:0005737">
    <property type="term" value="C:cytoplasm"/>
    <property type="evidence" value="ECO:0000318"/>
    <property type="project" value="GO_Central"/>
</dbReference>
<dbReference type="GO" id="GO:0005615">
    <property type="term" value="C:extracellular space"/>
    <property type="evidence" value="ECO:0000318"/>
    <property type="project" value="GO_Central"/>
</dbReference>
<dbReference type="GO" id="GO:0005634">
    <property type="term" value="C:nucleus"/>
    <property type="evidence" value="ECO:0000318"/>
    <property type="project" value="GO_Central"/>
</dbReference>
<dbReference type="GO" id="GO:0005104">
    <property type="term" value="F:fibroblast growth factor receptor binding"/>
    <property type="evidence" value="ECO:0000318"/>
    <property type="project" value="GO_Central"/>
</dbReference>
<dbReference type="GO" id="GO:0008083">
    <property type="term" value="F:growth factor activity"/>
    <property type="evidence" value="ECO:0000318"/>
    <property type="project" value="GO_Central"/>
</dbReference>
<dbReference type="GO" id="GO:0008201">
    <property type="term" value="F:heparin binding"/>
    <property type="evidence" value="ECO:0007669"/>
    <property type="project" value="UniProtKB-KW"/>
</dbReference>
<dbReference type="GO" id="GO:0005178">
    <property type="term" value="F:integrin binding"/>
    <property type="evidence" value="ECO:0000250"/>
    <property type="project" value="UniProtKB"/>
</dbReference>
<dbReference type="GO" id="GO:0001525">
    <property type="term" value="P:angiogenesis"/>
    <property type="evidence" value="ECO:0007669"/>
    <property type="project" value="UniProtKB-KW"/>
</dbReference>
<dbReference type="GO" id="GO:0001658">
    <property type="term" value="P:branching involved in ureteric bud morphogenesis"/>
    <property type="evidence" value="ECO:0000250"/>
    <property type="project" value="UniProtKB"/>
</dbReference>
<dbReference type="GO" id="GO:0008543">
    <property type="term" value="P:fibroblast growth factor receptor signaling pathway"/>
    <property type="evidence" value="ECO:0000318"/>
    <property type="project" value="GO_Central"/>
</dbReference>
<dbReference type="GO" id="GO:0022008">
    <property type="term" value="P:neurogenesis"/>
    <property type="evidence" value="ECO:0000318"/>
    <property type="project" value="GO_Central"/>
</dbReference>
<dbReference type="GO" id="GO:0045766">
    <property type="term" value="P:positive regulation of angiogenesis"/>
    <property type="evidence" value="ECO:0000250"/>
    <property type="project" value="UniProtKB"/>
</dbReference>
<dbReference type="GO" id="GO:0043536">
    <property type="term" value="P:positive regulation of blood vessel endothelial cell migration"/>
    <property type="evidence" value="ECO:0000250"/>
    <property type="project" value="UniProtKB"/>
</dbReference>
<dbReference type="GO" id="GO:0051781">
    <property type="term" value="P:positive regulation of cell division"/>
    <property type="evidence" value="ECO:0007669"/>
    <property type="project" value="UniProtKB-KW"/>
</dbReference>
<dbReference type="GO" id="GO:0090050">
    <property type="term" value="P:positive regulation of cell migration involved in sprouting angiogenesis"/>
    <property type="evidence" value="ECO:0000250"/>
    <property type="project" value="UniProtKB"/>
</dbReference>
<dbReference type="GO" id="GO:0008284">
    <property type="term" value="P:positive regulation of cell population proliferation"/>
    <property type="evidence" value="ECO:0000250"/>
    <property type="project" value="AgBase"/>
</dbReference>
<dbReference type="GO" id="GO:0070374">
    <property type="term" value="P:positive regulation of ERK1 and ERK2 cascade"/>
    <property type="evidence" value="ECO:0000250"/>
    <property type="project" value="UniProtKB"/>
</dbReference>
<dbReference type="GO" id="GO:1902748">
    <property type="term" value="P:positive regulation of lens fiber cell differentiation"/>
    <property type="evidence" value="ECO:0000250"/>
    <property type="project" value="UniProtKB"/>
</dbReference>
<dbReference type="GO" id="GO:0043410">
    <property type="term" value="P:positive regulation of MAPK cascade"/>
    <property type="evidence" value="ECO:0000318"/>
    <property type="project" value="GO_Central"/>
</dbReference>
<dbReference type="GO" id="GO:0001934">
    <property type="term" value="P:positive regulation of protein phosphorylation"/>
    <property type="evidence" value="ECO:0000250"/>
    <property type="project" value="UniProtKB"/>
</dbReference>
<dbReference type="GO" id="GO:1903672">
    <property type="term" value="P:positive regulation of sprouting angiogenesis"/>
    <property type="evidence" value="ECO:0000250"/>
    <property type="project" value="UniProtKB"/>
</dbReference>
<dbReference type="GO" id="GO:0030334">
    <property type="term" value="P:regulation of cell migration"/>
    <property type="evidence" value="ECO:0000318"/>
    <property type="project" value="GO_Central"/>
</dbReference>
<dbReference type="GO" id="GO:0007165">
    <property type="term" value="P:signal transduction"/>
    <property type="evidence" value="ECO:0000250"/>
    <property type="project" value="AgBase"/>
</dbReference>
<dbReference type="CDD" id="cd23314">
    <property type="entry name" value="beta-trefoil_FGF2"/>
    <property type="match status" value="1"/>
</dbReference>
<dbReference type="FunFam" id="2.80.10.50:FF:000020">
    <property type="entry name" value="Fibroblast growth factor 1"/>
    <property type="match status" value="1"/>
</dbReference>
<dbReference type="Gene3D" id="2.80.10.50">
    <property type="match status" value="1"/>
</dbReference>
<dbReference type="InterPro" id="IPR002209">
    <property type="entry name" value="Fibroblast_GF_fam"/>
</dbReference>
<dbReference type="InterPro" id="IPR008996">
    <property type="entry name" value="IL1/FGF"/>
</dbReference>
<dbReference type="PANTHER" id="PTHR11486">
    <property type="entry name" value="FIBROBLAST GROWTH FACTOR"/>
    <property type="match status" value="1"/>
</dbReference>
<dbReference type="Pfam" id="PF00167">
    <property type="entry name" value="FGF"/>
    <property type="match status" value="1"/>
</dbReference>
<dbReference type="PRINTS" id="PR00263">
    <property type="entry name" value="HBGFFGF"/>
</dbReference>
<dbReference type="PRINTS" id="PR00262">
    <property type="entry name" value="IL1HBGF"/>
</dbReference>
<dbReference type="SMART" id="SM00442">
    <property type="entry name" value="FGF"/>
    <property type="match status" value="1"/>
</dbReference>
<dbReference type="SUPFAM" id="SSF50353">
    <property type="entry name" value="Cytokine"/>
    <property type="match status" value="1"/>
</dbReference>
<dbReference type="PROSITE" id="PS00247">
    <property type="entry name" value="HBGF_FGF"/>
    <property type="match status" value="1"/>
</dbReference>
<gene>
    <name type="primary">FGF2</name>
</gene>
<accession>P03969</accession>
<reference key="1">
    <citation type="journal article" date="1986" name="Science">
        <title>Nucleotide sequence of a bovine clone encoding the angiogenic protein, basic fibroblast growth factor.</title>
        <authorList>
            <person name="Abraham J.A."/>
            <person name="Mergia A."/>
            <person name="Whang J.L."/>
            <person name="Tumolo A."/>
            <person name="Friedman J."/>
            <person name="Hjerrild K.A."/>
            <person name="Gospodarowicz D."/>
            <person name="Fiddes J.C."/>
        </authorList>
    </citation>
    <scope>NUCLEOTIDE SEQUENCE [MRNA]</scope>
</reference>
<reference key="2">
    <citation type="journal article" date="1986" name="Cold Spring Harb. Symp. Quant. Biol.">
        <title>Human basic fibroblast growth factor: nucleotide sequence, genomic organization, and expression in mammalian cells.</title>
        <authorList>
            <person name="Abraham J.A."/>
            <person name="Whang J.L."/>
            <person name="Tumolo A."/>
            <person name="Mergia A."/>
            <person name="Fiddes J.C."/>
        </authorList>
    </citation>
    <scope>NUCLEOTIDE SEQUENCE [MRNA]</scope>
</reference>
<reference key="3">
    <citation type="journal article" date="1985" name="Proc. Natl. Acad. Sci. U.S.A.">
        <title>Primary structure of bovine pituitary basic fibroblast growth factor (FGF) and comparison with the amino-terminal sequence of bovine brain acidic FGF.</title>
        <authorList>
            <person name="Esch F."/>
            <person name="Baird A."/>
            <person name="Ling N."/>
            <person name="Ueno N."/>
            <person name="Hill F."/>
            <person name="Denoroy L."/>
            <person name="Klepper R."/>
            <person name="Gospodarowicz D."/>
            <person name="Boehlen P."/>
            <person name="Guillemin R."/>
        </authorList>
    </citation>
    <scope>PROTEIN SEQUENCE OF 10-155</scope>
</reference>
<reference key="4">
    <citation type="journal article" date="1986" name="Biochem. Biophys. Res. Commun.">
        <title>Isolation of an amino terminal extended form of basic fibroblast growth factor.</title>
        <authorList>
            <person name="Ueno N."/>
            <person name="Baird A."/>
            <person name="Esch F."/>
            <person name="Ling N."/>
            <person name="Guillemin R."/>
        </authorList>
    </citation>
    <scope>PROTEIN SEQUENCE OF 10-19</scope>
</reference>
<reference key="5">
    <citation type="journal article" date="1986" name="Endocrinology">
        <title>Isolation of fibroblast growth factor from bovine adrenal gland: physicochemical and biological characterization.</title>
        <authorList>
            <person name="Gospodarowicz D."/>
            <person name="Baird A."/>
            <person name="Cheng J."/>
            <person name="Lui G.M."/>
            <person name="Esch F."/>
            <person name="Bohlen P."/>
        </authorList>
    </citation>
    <scope>PROTEIN SEQUENCE OF 10-23 AND 25-38</scope>
    <source>
        <tissue>Adrenal gland</tissue>
    </source>
</reference>
<reference key="6">
    <citation type="journal article" date="1984" name="Proc. Natl. Acad. Sci. U.S.A.">
        <title>Isolation and partial molecular characterization of pituitary fibroblast growth factor.</title>
        <authorList>
            <person name="Bohlen P."/>
            <person name="Baird A."/>
            <person name="Esch F."/>
            <person name="Ling N."/>
            <person name="Gospodarowicz D."/>
        </authorList>
    </citation>
    <scope>PROTEIN SEQUENCE OF 12-24</scope>
    <source>
        <tissue>Pituitary</tissue>
    </source>
</reference>
<reference key="7">
    <citation type="journal article" date="1987" name="Mol. Cell. Endocrinol.">
        <title>Isolation, characterisation and tissue localisation of an N-terminal-truncated variant of fibroblast growth factor.</title>
        <authorList>
            <person name="Bertolini J."/>
            <person name="Hearn M.T."/>
        </authorList>
    </citation>
    <scope>PROTEIN SEQUENCE OF 14-33</scope>
</reference>
<reference key="8">
    <citation type="journal article" date="1985" name="Regul. Pept.">
        <title>Isolation and partial characterization of an endothelial cell growth factor from the bovine kidney: homology with basic fibroblast growth factor.</title>
        <authorList>
            <person name="Baird A."/>
            <person name="Esch F."/>
            <person name="Boehlen P."/>
            <person name="Ling N."/>
            <person name="Gospodarowicz D."/>
        </authorList>
    </citation>
    <scope>PROTEIN SEQUENCE OF 25-41</scope>
    <source>
        <tissue>Kidney</tissue>
    </source>
</reference>
<reference key="9">
    <citation type="journal article" date="1986" name="Regul. Pept.">
        <title>Purification and partial characterization of a mitogenic factor from bovine liver: structural homology with basic fibroblast growth factor.</title>
        <authorList>
            <person name="Ueno N."/>
            <person name="Baird A."/>
            <person name="Esch F."/>
            <person name="Shimasaki S."/>
            <person name="Ling N."/>
            <person name="Guillemin R."/>
        </authorList>
    </citation>
    <scope>PROTEIN SEQUENCE OF 21-40</scope>
    <source>
        <tissue>Kidney</tissue>
    </source>
</reference>
<reference key="10">
    <citation type="journal article" date="1987" name="Mol. Cell. Endocrinol.">
        <title>Isolation and partial characterization of basic fibroblast growth factor from bovine testis.</title>
        <authorList>
            <person name="Ueno N."/>
            <person name="Baird A."/>
            <person name="Esch F."/>
            <person name="Ling N."/>
            <person name="Guillemin R."/>
        </authorList>
    </citation>
    <scope>PROTEIN SEQUENCE OF 25-39</scope>
    <source>
        <tissue>Testis</tissue>
    </source>
</reference>
<reference key="11">
    <citation type="journal article" date="2000" name="J. Biol. Chem.">
        <title>Structural characterization of the fibroblast growth factor-binding protein purified from bovine prepartum mammary gland secretion.</title>
        <authorList>
            <person name="Lametsch R."/>
            <person name="Rasmussen J.T."/>
            <person name="Johnsen L.B."/>
            <person name="Purup S."/>
            <person name="Sejrsen K."/>
            <person name="Petersen T.E."/>
            <person name="Heegaard C.W."/>
        </authorList>
    </citation>
    <scope>INTERACTION WITH FGFBP1</scope>
</reference>
<feature type="propeptide" id="PRO_0000008927" evidence="7 8 9">
    <location>
        <begin position="1"/>
        <end position="9"/>
    </location>
</feature>
<feature type="chain" id="PRO_0000008928" description="Fibroblast growth factor 2">
    <location>
        <begin position="10"/>
        <end position="155"/>
    </location>
</feature>
<feature type="chain" id="PRO_0000008929" description="Kidney-derived growth factor">
    <location>
        <begin position="25"/>
        <end position="155"/>
    </location>
</feature>
<feature type="region of interest" description="Disordered" evidence="6">
    <location>
        <begin position="1"/>
        <end position="20"/>
    </location>
</feature>
<feature type="region of interest" description="Heparin-binding" evidence="1">
    <location>
        <begin position="128"/>
        <end position="144"/>
    </location>
</feature>
<feature type="short sequence motif" description="Cell attachment site; atypical" evidence="5">
    <location>
        <begin position="46"/>
        <end position="48"/>
    </location>
</feature>
<feature type="short sequence motif" description="Cell attachment site; atypical" evidence="5">
    <location>
        <begin position="88"/>
        <end position="90"/>
    </location>
</feature>
<feature type="binding site" evidence="1">
    <location>
        <position position="36"/>
    </location>
    <ligand>
        <name>heparin</name>
        <dbReference type="ChEBI" id="CHEBI:28304"/>
    </ligand>
</feature>
<feature type="site" description="Important for interaction with integrin" evidence="2">
    <location>
        <position position="128"/>
    </location>
</feature>
<feature type="site" description="Important for interaction with integrin" evidence="2">
    <location>
        <position position="129"/>
    </location>
</feature>
<feature type="site" description="Important for interaction with integrin" evidence="2">
    <location>
        <position position="134"/>
    </location>
</feature>
<feature type="modified residue" description="Phosphotyrosine; by TEC" evidence="2">
    <location>
        <position position="82"/>
    </location>
</feature>
<feature type="cross-link" description="Glycyl lysine isopeptide (Lys-Gly) (interchain with G-Cter in SUMO1)" evidence="2">
    <location>
        <position position="95"/>
    </location>
</feature>
<evidence type="ECO:0000250" key="1"/>
<evidence type="ECO:0000250" key="2">
    <source>
        <dbReference type="UniProtKB" id="P09038"/>
    </source>
</evidence>
<evidence type="ECO:0000250" key="3">
    <source>
        <dbReference type="UniProtKB" id="P13109"/>
    </source>
</evidence>
<evidence type="ECO:0000250" key="4">
    <source>
        <dbReference type="UniProtKB" id="P15655"/>
    </source>
</evidence>
<evidence type="ECO:0000255" key="5"/>
<evidence type="ECO:0000256" key="6">
    <source>
        <dbReference type="SAM" id="MobiDB-lite"/>
    </source>
</evidence>
<evidence type="ECO:0000269" key="7">
    <source>
    </source>
</evidence>
<evidence type="ECO:0000269" key="8">
    <source>
    </source>
</evidence>
<evidence type="ECO:0000269" key="9">
    <source>
    </source>
</evidence>
<evidence type="ECO:0000305" key="10"/>
<comment type="function">
    <text evidence="2">Acts as a ligand for FGFR1, FGFR2, FGFR3 and FGFR4 (By similarity). Also acts as an integrin ligand which is required for FGF2 signaling (By similarity). Binds to integrin ITGAV:ITGB3 (By similarity). Plays an important role in the regulation of cell survival, cell division, cell differentiation and cell migration (By similarity). Functions as a potent mitogen in vitro (By similarity). Can induce angiogenesis (By similarity). Mediates phosphorylation of ERK1/2 and thereby promotes retinal lens fiber differentiation (By similarity).</text>
</comment>
<comment type="subunit">
    <text evidence="2 3 4">Monomer. Homodimer. Interacts with FGFR1, FGFR2, FGFR3 and FGFR4. Affinity between fibroblast growth factors (FGFs) and their receptors is increased by heparan sulfate glycosaminoglycans that function as coreceptors. Interacts with CSPG4, FGFBP1 and TEC. Found in a complex with FGFBP1, FGF1 and FGF2. Interacts with FGFBP3. Interacts with integrin ITGAV:ITGB3; the interaction is required for FGF2 signaling. Interacts with SNORC (via the extracellular domain). Interacts with glypican GPC3.</text>
</comment>
<comment type="subcellular location">
    <subcellularLocation>
        <location evidence="2">Secreted</location>
    </subcellularLocation>
    <subcellularLocation>
        <location evidence="2">Nucleus</location>
    </subcellularLocation>
    <text evidence="2">Exported from cells by an endoplasmic reticulum (ER)/Golgi-independent mechanism (By similarity). Unconventional secretion of FGF2 occurs by direct translocation across the plasma membrane (By similarity). Binding of exogenous FGF2 to FGFR facilitates endocytosis followed by translocation of FGF2 across endosomal membrane into the cytosol (By similarity). Nuclear import from the cytosol requires the classical nuclear import machinery, involving proteins KPNA1 and KPNB1, as well as CEP57 (By similarity).</text>
</comment>
<comment type="PTM">
    <text evidence="1">Phosphorylation at Tyr-82 regulates FGF2 unconventional secretion.</text>
</comment>
<comment type="similarity">
    <text evidence="10">Belongs to the heparin-binding growth factors family.</text>
</comment>
<sequence length="155" mass="17250">MAAGSITTLPALPEDGGSGAFPPGHFKDPKRLYCKNGGFFLRIHPDGRVDGVREKSDPHIKLQLQAEERGVVSIKGVCANRYLAMKEDGRLLASKCVTDECFFFERLESNNYNTYRSRKYSSWYVALKRTGQYKLGPKTGPGQKAILFLPMSAKS</sequence>
<protein>
    <recommendedName>
        <fullName>Fibroblast growth factor 2</fullName>
        <shortName>FGF-2</shortName>
    </recommendedName>
    <alternativeName>
        <fullName>Basic fibroblast growth factor</fullName>
        <shortName>bFGF</shortName>
    </alternativeName>
    <alternativeName>
        <fullName>Heparin-binding growth factor 2</fullName>
        <shortName>HBGF-2</shortName>
    </alternativeName>
    <component>
        <recommendedName>
            <fullName>Kidney-derived growth factor</fullName>
        </recommendedName>
    </component>
</protein>
<organism>
    <name type="scientific">Bos taurus</name>
    <name type="common">Bovine</name>
    <dbReference type="NCBI Taxonomy" id="9913"/>
    <lineage>
        <taxon>Eukaryota</taxon>
        <taxon>Metazoa</taxon>
        <taxon>Chordata</taxon>
        <taxon>Craniata</taxon>
        <taxon>Vertebrata</taxon>
        <taxon>Euteleostomi</taxon>
        <taxon>Mammalia</taxon>
        <taxon>Eutheria</taxon>
        <taxon>Laurasiatheria</taxon>
        <taxon>Artiodactyla</taxon>
        <taxon>Ruminantia</taxon>
        <taxon>Pecora</taxon>
        <taxon>Bovidae</taxon>
        <taxon>Bovinae</taxon>
        <taxon>Bos</taxon>
    </lineage>
</organism>